<feature type="chain" id="PRO_1000055337" description="Large ribosomal subunit protein uL13">
    <location>
        <begin position="1"/>
        <end position="142"/>
    </location>
</feature>
<comment type="function">
    <text evidence="1">This protein is one of the early assembly proteins of the 50S ribosomal subunit, although it is not seen to bind rRNA by itself. It is important during the early stages of 50S assembly.</text>
</comment>
<comment type="subunit">
    <text evidence="1">Part of the 50S ribosomal subunit.</text>
</comment>
<comment type="similarity">
    <text evidence="1">Belongs to the universal ribosomal protein uL13 family.</text>
</comment>
<protein>
    <recommendedName>
        <fullName evidence="1">Large ribosomal subunit protein uL13</fullName>
    </recommendedName>
    <alternativeName>
        <fullName evidence="2">50S ribosomal protein L13</fullName>
    </alternativeName>
</protein>
<sequence>MKTFVAKPETVKRDWYIVDAEGKTLGRIATEIASRLRGKHKAEYTPHVDTGDYIIVVNAEKVHVTGKKFTDKIYHSHSGFPGGIKSISFDKLIKRKPEMVIEAAVKGMLPKGPLGRAMFRKLKVYAGAEHAHAAQQPQVLDI</sequence>
<name>RL13_AERS4</name>
<reference key="1">
    <citation type="journal article" date="2008" name="BMC Genomics">
        <title>The genome of Aeromonas salmonicida subsp. salmonicida A449: insights into the evolution of a fish pathogen.</title>
        <authorList>
            <person name="Reith M.E."/>
            <person name="Singh R.K."/>
            <person name="Curtis B."/>
            <person name="Boyd J.M."/>
            <person name="Bouevitch A."/>
            <person name="Kimball J."/>
            <person name="Munholland J."/>
            <person name="Murphy C."/>
            <person name="Sarty D."/>
            <person name="Williams J."/>
            <person name="Nash J.H."/>
            <person name="Johnson S.C."/>
            <person name="Brown L.L."/>
        </authorList>
    </citation>
    <scope>NUCLEOTIDE SEQUENCE [LARGE SCALE GENOMIC DNA]</scope>
    <source>
        <strain>A449</strain>
    </source>
</reference>
<keyword id="KW-0687">Ribonucleoprotein</keyword>
<keyword id="KW-0689">Ribosomal protein</keyword>
<evidence type="ECO:0000255" key="1">
    <source>
        <dbReference type="HAMAP-Rule" id="MF_01366"/>
    </source>
</evidence>
<evidence type="ECO:0000305" key="2"/>
<dbReference type="EMBL" id="CP000644">
    <property type="protein sequence ID" value="ABO88516.1"/>
    <property type="molecule type" value="Genomic_DNA"/>
</dbReference>
<dbReference type="RefSeq" id="WP_005314367.1">
    <property type="nucleotide sequence ID" value="NC_009348.1"/>
</dbReference>
<dbReference type="SMR" id="A4SHZ4"/>
<dbReference type="STRING" id="29491.GCA_000820065_03357"/>
<dbReference type="GeneID" id="79877911"/>
<dbReference type="KEGG" id="asa:ASA_0333"/>
<dbReference type="eggNOG" id="COG0102">
    <property type="taxonomic scope" value="Bacteria"/>
</dbReference>
<dbReference type="HOGENOM" id="CLU_082184_2_2_6"/>
<dbReference type="Proteomes" id="UP000000225">
    <property type="component" value="Chromosome"/>
</dbReference>
<dbReference type="GO" id="GO:0022625">
    <property type="term" value="C:cytosolic large ribosomal subunit"/>
    <property type="evidence" value="ECO:0007669"/>
    <property type="project" value="TreeGrafter"/>
</dbReference>
<dbReference type="GO" id="GO:0003729">
    <property type="term" value="F:mRNA binding"/>
    <property type="evidence" value="ECO:0007669"/>
    <property type="project" value="TreeGrafter"/>
</dbReference>
<dbReference type="GO" id="GO:0003735">
    <property type="term" value="F:structural constituent of ribosome"/>
    <property type="evidence" value="ECO:0007669"/>
    <property type="project" value="InterPro"/>
</dbReference>
<dbReference type="GO" id="GO:0017148">
    <property type="term" value="P:negative regulation of translation"/>
    <property type="evidence" value="ECO:0007669"/>
    <property type="project" value="TreeGrafter"/>
</dbReference>
<dbReference type="GO" id="GO:0006412">
    <property type="term" value="P:translation"/>
    <property type="evidence" value="ECO:0007669"/>
    <property type="project" value="UniProtKB-UniRule"/>
</dbReference>
<dbReference type="CDD" id="cd00392">
    <property type="entry name" value="Ribosomal_L13"/>
    <property type="match status" value="1"/>
</dbReference>
<dbReference type="FunFam" id="3.90.1180.10:FF:000001">
    <property type="entry name" value="50S ribosomal protein L13"/>
    <property type="match status" value="1"/>
</dbReference>
<dbReference type="Gene3D" id="3.90.1180.10">
    <property type="entry name" value="Ribosomal protein L13"/>
    <property type="match status" value="1"/>
</dbReference>
<dbReference type="HAMAP" id="MF_01366">
    <property type="entry name" value="Ribosomal_uL13"/>
    <property type="match status" value="1"/>
</dbReference>
<dbReference type="InterPro" id="IPR005822">
    <property type="entry name" value="Ribosomal_uL13"/>
</dbReference>
<dbReference type="InterPro" id="IPR005823">
    <property type="entry name" value="Ribosomal_uL13_bac-type"/>
</dbReference>
<dbReference type="InterPro" id="IPR023563">
    <property type="entry name" value="Ribosomal_uL13_CS"/>
</dbReference>
<dbReference type="InterPro" id="IPR036899">
    <property type="entry name" value="Ribosomal_uL13_sf"/>
</dbReference>
<dbReference type="NCBIfam" id="TIGR01066">
    <property type="entry name" value="rplM_bact"/>
    <property type="match status" value="1"/>
</dbReference>
<dbReference type="PANTHER" id="PTHR11545:SF2">
    <property type="entry name" value="LARGE RIBOSOMAL SUBUNIT PROTEIN UL13M"/>
    <property type="match status" value="1"/>
</dbReference>
<dbReference type="PANTHER" id="PTHR11545">
    <property type="entry name" value="RIBOSOMAL PROTEIN L13"/>
    <property type="match status" value="1"/>
</dbReference>
<dbReference type="Pfam" id="PF00572">
    <property type="entry name" value="Ribosomal_L13"/>
    <property type="match status" value="1"/>
</dbReference>
<dbReference type="PIRSF" id="PIRSF002181">
    <property type="entry name" value="Ribosomal_L13"/>
    <property type="match status" value="1"/>
</dbReference>
<dbReference type="SUPFAM" id="SSF52161">
    <property type="entry name" value="Ribosomal protein L13"/>
    <property type="match status" value="1"/>
</dbReference>
<dbReference type="PROSITE" id="PS00783">
    <property type="entry name" value="RIBOSOMAL_L13"/>
    <property type="match status" value="1"/>
</dbReference>
<accession>A4SHZ4</accession>
<proteinExistence type="inferred from homology"/>
<organism>
    <name type="scientific">Aeromonas salmonicida (strain A449)</name>
    <dbReference type="NCBI Taxonomy" id="382245"/>
    <lineage>
        <taxon>Bacteria</taxon>
        <taxon>Pseudomonadati</taxon>
        <taxon>Pseudomonadota</taxon>
        <taxon>Gammaproteobacteria</taxon>
        <taxon>Aeromonadales</taxon>
        <taxon>Aeromonadaceae</taxon>
        <taxon>Aeromonas</taxon>
    </lineage>
</organism>
<gene>
    <name evidence="1" type="primary">rplM</name>
    <name type="ordered locus">ASA_0333</name>
</gene>